<reference key="1">
    <citation type="journal article" date="2005" name="Nature">
        <title>Genome sequencing and analysis of Aspergillus oryzae.</title>
        <authorList>
            <person name="Machida M."/>
            <person name="Asai K."/>
            <person name="Sano M."/>
            <person name="Tanaka T."/>
            <person name="Kumagai T."/>
            <person name="Terai G."/>
            <person name="Kusumoto K."/>
            <person name="Arima T."/>
            <person name="Akita O."/>
            <person name="Kashiwagi Y."/>
            <person name="Abe K."/>
            <person name="Gomi K."/>
            <person name="Horiuchi H."/>
            <person name="Kitamoto K."/>
            <person name="Kobayashi T."/>
            <person name="Takeuchi M."/>
            <person name="Denning D.W."/>
            <person name="Galagan J.E."/>
            <person name="Nierman W.C."/>
            <person name="Yu J."/>
            <person name="Archer D.B."/>
            <person name="Bennett J.W."/>
            <person name="Bhatnagar D."/>
            <person name="Cleveland T.E."/>
            <person name="Fedorova N.D."/>
            <person name="Gotoh O."/>
            <person name="Horikawa H."/>
            <person name="Hosoyama A."/>
            <person name="Ichinomiya M."/>
            <person name="Igarashi R."/>
            <person name="Iwashita K."/>
            <person name="Juvvadi P.R."/>
            <person name="Kato M."/>
            <person name="Kato Y."/>
            <person name="Kin T."/>
            <person name="Kokubun A."/>
            <person name="Maeda H."/>
            <person name="Maeyama N."/>
            <person name="Maruyama J."/>
            <person name="Nagasaki H."/>
            <person name="Nakajima T."/>
            <person name="Oda K."/>
            <person name="Okada K."/>
            <person name="Paulsen I."/>
            <person name="Sakamoto K."/>
            <person name="Sawano T."/>
            <person name="Takahashi M."/>
            <person name="Takase K."/>
            <person name="Terabayashi Y."/>
            <person name="Wortman J.R."/>
            <person name="Yamada O."/>
            <person name="Yamagata Y."/>
            <person name="Anazawa H."/>
            <person name="Hata Y."/>
            <person name="Koide Y."/>
            <person name="Komori T."/>
            <person name="Koyama Y."/>
            <person name="Minetoki T."/>
            <person name="Suharnan S."/>
            <person name="Tanaka A."/>
            <person name="Isono K."/>
            <person name="Kuhara S."/>
            <person name="Ogasawara N."/>
            <person name="Kikuchi H."/>
        </authorList>
    </citation>
    <scope>NUCLEOTIDE SEQUENCE [LARGE SCALE GENOMIC DNA]</scope>
    <source>
        <strain>ATCC 42149 / RIB 40</strain>
    </source>
</reference>
<comment type="function">
    <text evidence="1">Alpha-glucuronidase involved in the hydrolysis of xylan, a major structural heterogeneous polysaccharide found in plant biomass representing the second most abundant polysaccharide in the biosphere, after cellulose. Releases 4-O-methylglucuronic acid from xylan (By similarity).</text>
</comment>
<comment type="catalytic activity">
    <reaction>
        <text>an alpha-D-glucuronoside + H2O = D-glucuronate + an alcohol</text>
        <dbReference type="Rhea" id="RHEA:20005"/>
        <dbReference type="ChEBI" id="CHEBI:15377"/>
        <dbReference type="ChEBI" id="CHEBI:30879"/>
        <dbReference type="ChEBI" id="CHEBI:58720"/>
        <dbReference type="ChEBI" id="CHEBI:58899"/>
        <dbReference type="EC" id="3.2.1.139"/>
    </reaction>
</comment>
<comment type="subcellular location">
    <subcellularLocation>
        <location evidence="1">Secreted</location>
    </subcellularLocation>
</comment>
<comment type="similarity">
    <text evidence="3">Belongs to the glycosyl hydrolase 67 family.</text>
</comment>
<sequence length="835" mass="93450">MRWSFLTVLLWLVSLTGAENGFNGWLRYAPVQCDKRCQRALPSSIVTLNSTDSGPIGTASQELQAGLENIVGKQLSIKRSSCGSRSSILVATLEQYRQACNRSSEVPSLGIDGFWLRAYGDTVQIVGENERGALYGAFEYLSLLAQGNFSHVDYTTSAHAPVRWVNQWDNMDGSIERGYAGPSIFFEDGHIVEDLSRVKQYARLLASIRINGVIVNNVNANATLLTSQNMDGLARIANVFRPYGIQIGISLNFASPDTLGGLGTYDPLDPSVISWWANITDSLYDRVPDMAGYLVKASSEGQPGPDTYNRTLAEGANVFAKALQPHGGILMFRTFVYDHHINESIWTNDRANAQVDFFKELDGQFEDNIKYGPIDFQVREPVSPLFANLYKTNMAIELQVTQEYLGQQDHLVYLSPLWKELLDFDLRVDHQPSLVRDIVSGQRFDRQLGGWAAVVNVGTNTTWLGSHLAMSNLYAYGRLAWSPTDDSQGILQDWIRLTFGRDQNVLDAITDMSMASWPAYENYTGNLGIQTLTDILYTHYGPNPASQDNNGWGQWTRADHDTIGMDRTVKNGTGNAGQYPAEIAQVYEDLDSTPDDLLLWFHHVPYTHRLHSGKTVIQHFYDAHYDGAETAHRFLSQWESLKGRIDQQRYNEVLSRLVYQAGHSLVWRDAINNFYWNMSGISDEKNRLGHHPWRVEAESMTLDGYEPYTVSPFETASNYKAVVTTSNSTTGTAQTKLQFPSGTYDLGVNYYDMYGGKSEWTVYVNDRVVGQWEGNSENTLGHTPSIYIDGHSATRITFRGVEIENGDQLKIVGVPDGVEPAPLDYVVLLPPDVVD</sequence>
<gene>
    <name type="primary">aguA</name>
    <name type="ORF">AO090026000127</name>
</gene>
<evidence type="ECO:0000250" key="1"/>
<evidence type="ECO:0000255" key="2"/>
<evidence type="ECO:0000305" key="3"/>
<protein>
    <recommendedName>
        <fullName>Probable alpha-glucuronidase A</fullName>
        <ecNumber>3.2.1.139</ecNumber>
    </recommendedName>
    <alternativeName>
        <fullName>Alpha-glucosiduronase A</fullName>
    </alternativeName>
</protein>
<dbReference type="EC" id="3.2.1.139"/>
<dbReference type="EMBL" id="BA000051">
    <property type="protein sequence ID" value="BAE59621.1"/>
    <property type="molecule type" value="Genomic_DNA"/>
</dbReference>
<dbReference type="SMR" id="Q2UFP4"/>
<dbReference type="STRING" id="510516.Q2UFP4"/>
<dbReference type="CAZy" id="GH67">
    <property type="family name" value="Glycoside Hydrolase Family 67"/>
</dbReference>
<dbReference type="GlyCosmos" id="Q2UFP4">
    <property type="glycosylation" value="12 sites, No reported glycans"/>
</dbReference>
<dbReference type="EnsemblFungi" id="BAE59621">
    <property type="protein sequence ID" value="BAE59621"/>
    <property type="gene ID" value="AO090026000127"/>
</dbReference>
<dbReference type="VEuPathDB" id="FungiDB:AO090026000127"/>
<dbReference type="HOGENOM" id="CLU_007125_2_0_1"/>
<dbReference type="OMA" id="IWRAFVY"/>
<dbReference type="Proteomes" id="UP000006564">
    <property type="component" value="Chromosome 3"/>
</dbReference>
<dbReference type="GO" id="GO:0005576">
    <property type="term" value="C:extracellular region"/>
    <property type="evidence" value="ECO:0007669"/>
    <property type="project" value="UniProtKB-SubCell"/>
</dbReference>
<dbReference type="GO" id="GO:0046559">
    <property type="term" value="F:alpha-glucuronidase activity"/>
    <property type="evidence" value="ECO:0007669"/>
    <property type="project" value="UniProtKB-EC"/>
</dbReference>
<dbReference type="GO" id="GO:0045493">
    <property type="term" value="P:xylan catabolic process"/>
    <property type="evidence" value="ECO:0007669"/>
    <property type="project" value="UniProtKB-KW"/>
</dbReference>
<dbReference type="CDD" id="cd02795">
    <property type="entry name" value="CBM6-CBM35-CBM36_like"/>
    <property type="match status" value="1"/>
</dbReference>
<dbReference type="FunFam" id="3.20.20.80:FF:000096">
    <property type="entry name" value="Xylan alpha-1,2-glucuronidase"/>
    <property type="match status" value="1"/>
</dbReference>
<dbReference type="FunFam" id="3.90.1330.10:FF:000001">
    <property type="entry name" value="Xylan alpha-1,2-glucuronidase"/>
    <property type="match status" value="1"/>
</dbReference>
<dbReference type="Gene3D" id="3.90.1330.10">
    <property type="entry name" value="Alpha-glucuronidase, C-terminal domain"/>
    <property type="match status" value="1"/>
</dbReference>
<dbReference type="Gene3D" id="3.30.379.10">
    <property type="entry name" value="Chitobiase/beta-hexosaminidase domain 2-like"/>
    <property type="match status" value="1"/>
</dbReference>
<dbReference type="Gene3D" id="3.20.20.80">
    <property type="entry name" value="Glycosidases"/>
    <property type="match status" value="1"/>
</dbReference>
<dbReference type="InterPro" id="IPR037054">
    <property type="entry name" value="A-glucoronidase_C_sf"/>
</dbReference>
<dbReference type="InterPro" id="IPR011395">
    <property type="entry name" value="Glyco_hydro_67_aGlcAse"/>
</dbReference>
<dbReference type="InterPro" id="IPR005154">
    <property type="entry name" value="Glyco_hydro_67_aGlcAse_N"/>
</dbReference>
<dbReference type="InterPro" id="IPR011099">
    <property type="entry name" value="Glyco_hydro_67_C"/>
</dbReference>
<dbReference type="InterPro" id="IPR011100">
    <property type="entry name" value="Glyco_hydro_67_cat"/>
</dbReference>
<dbReference type="InterPro" id="IPR017853">
    <property type="entry name" value="Glycoside_hydrolase_SF"/>
</dbReference>
<dbReference type="InterPro" id="IPR029018">
    <property type="entry name" value="Hex-like_dom2"/>
</dbReference>
<dbReference type="PANTHER" id="PTHR39207">
    <property type="entry name" value="ALPHA-GLUCURONIDASE A"/>
    <property type="match status" value="1"/>
</dbReference>
<dbReference type="PANTHER" id="PTHR39207:SF1">
    <property type="entry name" value="ALPHA-GLUCURONIDASE A"/>
    <property type="match status" value="1"/>
</dbReference>
<dbReference type="Pfam" id="PF07477">
    <property type="entry name" value="Glyco_hydro_67C"/>
    <property type="match status" value="1"/>
</dbReference>
<dbReference type="Pfam" id="PF07488">
    <property type="entry name" value="Glyco_hydro_67M"/>
    <property type="match status" value="1"/>
</dbReference>
<dbReference type="Pfam" id="PF03648">
    <property type="entry name" value="Glyco_hydro_67N"/>
    <property type="match status" value="1"/>
</dbReference>
<dbReference type="PIRSF" id="PIRSF029900">
    <property type="entry name" value="Alpha-glucuronds"/>
    <property type="match status" value="1"/>
</dbReference>
<dbReference type="SUPFAM" id="SSF51445">
    <property type="entry name" value="(Trans)glycosidases"/>
    <property type="match status" value="1"/>
</dbReference>
<dbReference type="SUPFAM" id="SSF55545">
    <property type="entry name" value="beta-N-acetylhexosaminidase-like domain"/>
    <property type="match status" value="1"/>
</dbReference>
<accession>Q2UFP4</accession>
<feature type="signal peptide" evidence="2">
    <location>
        <begin position="1"/>
        <end position="18"/>
    </location>
</feature>
<feature type="chain" id="PRO_0000393489" description="Probable alpha-glucuronidase A">
    <location>
        <begin position="19"/>
        <end position="835"/>
    </location>
</feature>
<feature type="glycosylation site" description="N-linked (GlcNAc...) asparagine" evidence="2">
    <location>
        <position position="49"/>
    </location>
</feature>
<feature type="glycosylation site" description="N-linked (GlcNAc...) asparagine" evidence="2">
    <location>
        <position position="101"/>
    </location>
</feature>
<feature type="glycosylation site" description="N-linked (GlcNAc...) asparagine" evidence="2">
    <location>
        <position position="148"/>
    </location>
</feature>
<feature type="glycosylation site" description="N-linked (GlcNAc...) asparagine" evidence="2">
    <location>
        <position position="221"/>
    </location>
</feature>
<feature type="glycosylation site" description="N-linked (GlcNAc...) asparagine" evidence="2">
    <location>
        <position position="278"/>
    </location>
</feature>
<feature type="glycosylation site" description="N-linked (GlcNAc...) asparagine" evidence="2">
    <location>
        <position position="309"/>
    </location>
</feature>
<feature type="glycosylation site" description="N-linked (GlcNAc...) asparagine" evidence="2">
    <location>
        <position position="342"/>
    </location>
</feature>
<feature type="glycosylation site" description="N-linked (GlcNAc...) asparagine" evidence="2">
    <location>
        <position position="460"/>
    </location>
</feature>
<feature type="glycosylation site" description="N-linked (GlcNAc...) asparagine" evidence="2">
    <location>
        <position position="522"/>
    </location>
</feature>
<feature type="glycosylation site" description="N-linked (GlcNAc...) asparagine" evidence="2">
    <location>
        <position position="571"/>
    </location>
</feature>
<feature type="glycosylation site" description="N-linked (GlcNAc...) asparagine" evidence="2">
    <location>
        <position position="677"/>
    </location>
</feature>
<feature type="glycosylation site" description="N-linked (GlcNAc...) asparagine" evidence="2">
    <location>
        <position position="727"/>
    </location>
</feature>
<proteinExistence type="inferred from homology"/>
<keyword id="KW-0119">Carbohydrate metabolism</keyword>
<keyword id="KW-0325">Glycoprotein</keyword>
<keyword id="KW-0326">Glycosidase</keyword>
<keyword id="KW-0378">Hydrolase</keyword>
<keyword id="KW-0624">Polysaccharide degradation</keyword>
<keyword id="KW-1185">Reference proteome</keyword>
<keyword id="KW-0964">Secreted</keyword>
<keyword id="KW-0732">Signal</keyword>
<keyword id="KW-0858">Xylan degradation</keyword>
<name>AGUA_ASPOR</name>
<organism>
    <name type="scientific">Aspergillus oryzae (strain ATCC 42149 / RIB 40)</name>
    <name type="common">Yellow koji mold</name>
    <dbReference type="NCBI Taxonomy" id="510516"/>
    <lineage>
        <taxon>Eukaryota</taxon>
        <taxon>Fungi</taxon>
        <taxon>Dikarya</taxon>
        <taxon>Ascomycota</taxon>
        <taxon>Pezizomycotina</taxon>
        <taxon>Eurotiomycetes</taxon>
        <taxon>Eurotiomycetidae</taxon>
        <taxon>Eurotiales</taxon>
        <taxon>Aspergillaceae</taxon>
        <taxon>Aspergillus</taxon>
        <taxon>Aspergillus subgen. Circumdati</taxon>
    </lineage>
</organism>